<evidence type="ECO:0000255" key="1">
    <source>
        <dbReference type="HAMAP-Rule" id="MF_01257"/>
    </source>
</evidence>
<comment type="function">
    <text evidence="1">Catalyzes the transfer of the 2-phospholactate moiety from (2S)-lactyl-2-diphospho-5'-guanosine to 7,8-didemethyl-8-hydroxy-5-deazariboflavin (FO) with the formation of oxidized coenzyme F420-0 and GMP.</text>
</comment>
<comment type="catalytic activity">
    <reaction evidence="1">
        <text>(2S)-lactyl-2-diphospho-5'-guanosine + 7,8-didemethyl-8-hydroxy-5-deazariboflavin = oxidized coenzyme F420-0 + GMP + H(+)</text>
        <dbReference type="Rhea" id="RHEA:63444"/>
        <dbReference type="ChEBI" id="CHEBI:15378"/>
        <dbReference type="ChEBI" id="CHEBI:58115"/>
        <dbReference type="ChEBI" id="CHEBI:59435"/>
        <dbReference type="ChEBI" id="CHEBI:59904"/>
        <dbReference type="ChEBI" id="CHEBI:59907"/>
        <dbReference type="EC" id="2.7.8.28"/>
    </reaction>
</comment>
<comment type="cofactor">
    <cofactor evidence="1">
        <name>Mg(2+)</name>
        <dbReference type="ChEBI" id="CHEBI:18420"/>
    </cofactor>
</comment>
<comment type="pathway">
    <text evidence="1">Cofactor biosynthesis; coenzyme F420 biosynthesis.</text>
</comment>
<comment type="subunit">
    <text evidence="1">Homodimer.</text>
</comment>
<comment type="similarity">
    <text evidence="1">Belongs to the CofD family.</text>
</comment>
<proteinExistence type="inferred from homology"/>
<dbReference type="EC" id="2.7.8.28" evidence="1"/>
<dbReference type="EMBL" id="AE009439">
    <property type="protein sequence ID" value="AAM02702.1"/>
    <property type="molecule type" value="Genomic_DNA"/>
</dbReference>
<dbReference type="RefSeq" id="WP_011019857.1">
    <property type="nucleotide sequence ID" value="NC_003551.1"/>
</dbReference>
<dbReference type="SMR" id="Q8TVA3"/>
<dbReference type="FunCoup" id="Q8TVA3">
    <property type="interactions" value="84"/>
</dbReference>
<dbReference type="STRING" id="190192.MK1489"/>
<dbReference type="PaxDb" id="190192-MK1489"/>
<dbReference type="EnsemblBacteria" id="AAM02702">
    <property type="protein sequence ID" value="AAM02702"/>
    <property type="gene ID" value="MK1489"/>
</dbReference>
<dbReference type="GeneID" id="1478084"/>
<dbReference type="KEGG" id="mka:MK1489"/>
<dbReference type="PATRIC" id="fig|190192.8.peg.1647"/>
<dbReference type="HOGENOM" id="CLU_055795_1_0_2"/>
<dbReference type="InParanoid" id="Q8TVA3"/>
<dbReference type="OrthoDB" id="59563at2157"/>
<dbReference type="UniPathway" id="UPA00071"/>
<dbReference type="Proteomes" id="UP000001826">
    <property type="component" value="Chromosome"/>
</dbReference>
<dbReference type="GO" id="GO:0043743">
    <property type="term" value="F:LPPG:FO 2-phospho-L-lactate transferase activity"/>
    <property type="evidence" value="ECO:0007669"/>
    <property type="project" value="UniProtKB-EC"/>
</dbReference>
<dbReference type="GO" id="GO:0000287">
    <property type="term" value="F:magnesium ion binding"/>
    <property type="evidence" value="ECO:0007669"/>
    <property type="project" value="InterPro"/>
</dbReference>
<dbReference type="GO" id="GO:0052645">
    <property type="term" value="P:F420-0 metabolic process"/>
    <property type="evidence" value="ECO:0007669"/>
    <property type="project" value="UniProtKB-UniRule"/>
</dbReference>
<dbReference type="CDD" id="cd07186">
    <property type="entry name" value="CofD_like"/>
    <property type="match status" value="1"/>
</dbReference>
<dbReference type="Gene3D" id="1.10.8.240">
    <property type="entry name" value="CofD-like domain"/>
    <property type="match status" value="1"/>
</dbReference>
<dbReference type="Gene3D" id="3.40.50.10680">
    <property type="entry name" value="CofD-like domains"/>
    <property type="match status" value="1"/>
</dbReference>
<dbReference type="HAMAP" id="MF_01257">
    <property type="entry name" value="CofD"/>
    <property type="match status" value="1"/>
</dbReference>
<dbReference type="InterPro" id="IPR002882">
    <property type="entry name" value="CofD"/>
</dbReference>
<dbReference type="InterPro" id="IPR038136">
    <property type="entry name" value="CofD-like_dom_sf"/>
</dbReference>
<dbReference type="InterPro" id="IPR010115">
    <property type="entry name" value="FbiA/CofD"/>
</dbReference>
<dbReference type="NCBIfam" id="TIGR01819">
    <property type="entry name" value="F420_cofD"/>
    <property type="match status" value="1"/>
</dbReference>
<dbReference type="PANTHER" id="PTHR43007">
    <property type="entry name" value="2-PHOSPHO-L-LACTATE TRANSFERASE"/>
    <property type="match status" value="1"/>
</dbReference>
<dbReference type="PANTHER" id="PTHR43007:SF1">
    <property type="entry name" value="2-PHOSPHO-L-LACTATE TRANSFERASE"/>
    <property type="match status" value="1"/>
</dbReference>
<dbReference type="Pfam" id="PF01933">
    <property type="entry name" value="CofD"/>
    <property type="match status" value="1"/>
</dbReference>
<dbReference type="SUPFAM" id="SSF142338">
    <property type="entry name" value="CofD-like"/>
    <property type="match status" value="1"/>
</dbReference>
<reference key="1">
    <citation type="journal article" date="2002" name="Proc. Natl. Acad. Sci. U.S.A.">
        <title>The complete genome of hyperthermophile Methanopyrus kandleri AV19 and monophyly of archaeal methanogens.</title>
        <authorList>
            <person name="Slesarev A.I."/>
            <person name="Mezhevaya K.V."/>
            <person name="Makarova K.S."/>
            <person name="Polushin N.N."/>
            <person name="Shcherbinina O.V."/>
            <person name="Shakhova V.V."/>
            <person name="Belova G.I."/>
            <person name="Aravind L."/>
            <person name="Natale D.A."/>
            <person name="Rogozin I.B."/>
            <person name="Tatusov R.L."/>
            <person name="Wolf Y.I."/>
            <person name="Stetter K.O."/>
            <person name="Malykh A.G."/>
            <person name="Koonin E.V."/>
            <person name="Kozyavkin S.A."/>
        </authorList>
    </citation>
    <scope>NUCLEOTIDE SEQUENCE [LARGE SCALE GENOMIC DNA]</scope>
    <source>
        <strain>AV19 / DSM 6324 / JCM 9639 / NBRC 100938</strain>
    </source>
</reference>
<name>COFD_METKA</name>
<accession>Q8TVA3</accession>
<gene>
    <name evidence="1" type="primary">cofD</name>
    <name type="ordered locus">MK1489</name>
</gene>
<feature type="chain" id="PRO_0000145773" description="2-phospho-L-lactate transferase">
    <location>
        <begin position="1"/>
        <end position="310"/>
    </location>
</feature>
<feature type="binding site" evidence="1">
    <location>
        <position position="50"/>
    </location>
    <ligand>
        <name>7,8-didemethyl-8-hydroxy-5-deazariboflavin</name>
        <dbReference type="ChEBI" id="CHEBI:59904"/>
    </ligand>
</feature>
<feature type="binding site" evidence="1">
    <location>
        <position position="89"/>
    </location>
    <ligand>
        <name>7,8-didemethyl-8-hydroxy-5-deazariboflavin</name>
        <dbReference type="ChEBI" id="CHEBI:59904"/>
    </ligand>
</feature>
<keyword id="KW-0460">Magnesium</keyword>
<keyword id="KW-1185">Reference proteome</keyword>
<keyword id="KW-0808">Transferase</keyword>
<sequence>MNLRLTVLSGGTGTPKLLRGLRELEADFSVIVNTGEDDEILGLYVSPDVDTVLYTLAGIVNDETWYGIKDDGFRGHEFLERLGVDEPLRIGDADRALKQYRTYLMREKGLKLSEAVDEIRRRLGIKWKVYPMTDDRVTTIVETDEGDLHFREFWVERGGKPPVRGVRYEGAEEASPPPDAVDELLRADVVLIGPSNPVTSIGPILSISEIRHIVREKPVVMVSPFIGREPVSGPAGKLMRAVGFEPSVRGLVEYYREWGVEPDVLIMDERDDVELPEGLEVVRTDTLMRDEKDSVRLAREVLRIVEELVG</sequence>
<organism>
    <name type="scientific">Methanopyrus kandleri (strain AV19 / DSM 6324 / JCM 9639 / NBRC 100938)</name>
    <dbReference type="NCBI Taxonomy" id="190192"/>
    <lineage>
        <taxon>Archaea</taxon>
        <taxon>Methanobacteriati</taxon>
        <taxon>Methanobacteriota</taxon>
        <taxon>Methanomada group</taxon>
        <taxon>Methanopyri</taxon>
        <taxon>Methanopyrales</taxon>
        <taxon>Methanopyraceae</taxon>
        <taxon>Methanopyrus</taxon>
    </lineage>
</organism>
<protein>
    <recommendedName>
        <fullName evidence="1">2-phospho-L-lactate transferase</fullName>
        <ecNumber evidence="1">2.7.8.28</ecNumber>
    </recommendedName>
</protein>